<evidence type="ECO:0000255" key="1"/>
<evidence type="ECO:0000305" key="2"/>
<proteinExistence type="predicted"/>
<dbReference type="EMBL" id="AE000511">
    <property type="protein sequence ID" value="AAD07161.1"/>
    <property type="molecule type" value="Genomic_DNA"/>
</dbReference>
<dbReference type="PIR" id="E64530">
    <property type="entry name" value="E64530"/>
</dbReference>
<dbReference type="RefSeq" id="NP_206885.1">
    <property type="nucleotide sequence ID" value="NC_000915.1"/>
</dbReference>
<dbReference type="RefSeq" id="WP_001168427.1">
    <property type="nucleotide sequence ID" value="NC_018939.1"/>
</dbReference>
<dbReference type="SMR" id="P64651"/>
<dbReference type="IntAct" id="P64651">
    <property type="interactions" value="1"/>
</dbReference>
<dbReference type="MINT" id="P64651"/>
<dbReference type="STRING" id="85962.HP_0085"/>
<dbReference type="PaxDb" id="85962-C694_00415"/>
<dbReference type="EnsemblBacteria" id="AAD07161">
    <property type="protein sequence ID" value="AAD07161"/>
    <property type="gene ID" value="HP_0085"/>
</dbReference>
<dbReference type="KEGG" id="heo:C694_00415"/>
<dbReference type="KEGG" id="hpy:HP_0085"/>
<dbReference type="PATRIC" id="fig|85962.47.peg.91"/>
<dbReference type="InParanoid" id="P64651"/>
<dbReference type="Proteomes" id="UP000000429">
    <property type="component" value="Chromosome"/>
</dbReference>
<dbReference type="GO" id="GO:0016020">
    <property type="term" value="C:membrane"/>
    <property type="evidence" value="ECO:0007669"/>
    <property type="project" value="UniProtKB-SubCell"/>
</dbReference>
<dbReference type="InterPro" id="IPR035366">
    <property type="entry name" value="DUF5408"/>
</dbReference>
<dbReference type="Pfam" id="PF17402">
    <property type="entry name" value="DUF5408"/>
    <property type="match status" value="1"/>
</dbReference>
<keyword id="KW-0472">Membrane</keyword>
<keyword id="KW-1185">Reference proteome</keyword>
<keyword id="KW-0812">Transmembrane</keyword>
<keyword id="KW-1133">Transmembrane helix</keyword>
<organism>
    <name type="scientific">Helicobacter pylori (strain ATCC 700392 / 26695)</name>
    <name type="common">Campylobacter pylori</name>
    <dbReference type="NCBI Taxonomy" id="85962"/>
    <lineage>
        <taxon>Bacteria</taxon>
        <taxon>Pseudomonadati</taxon>
        <taxon>Campylobacterota</taxon>
        <taxon>Epsilonproteobacteria</taxon>
        <taxon>Campylobacterales</taxon>
        <taxon>Helicobacteraceae</taxon>
        <taxon>Helicobacter</taxon>
    </lineage>
</organism>
<reference key="1">
    <citation type="journal article" date="1997" name="Nature">
        <title>The complete genome sequence of the gastric pathogen Helicobacter pylori.</title>
        <authorList>
            <person name="Tomb J.-F."/>
            <person name="White O."/>
            <person name="Kerlavage A.R."/>
            <person name="Clayton R.A."/>
            <person name="Sutton G.G."/>
            <person name="Fleischmann R.D."/>
            <person name="Ketchum K.A."/>
            <person name="Klenk H.-P."/>
            <person name="Gill S.R."/>
            <person name="Dougherty B.A."/>
            <person name="Nelson K.E."/>
            <person name="Quackenbush J."/>
            <person name="Zhou L."/>
            <person name="Kirkness E.F."/>
            <person name="Peterson S.N."/>
            <person name="Loftus B.J."/>
            <person name="Richardson D.L."/>
            <person name="Dodson R.J."/>
            <person name="Khalak H.G."/>
            <person name="Glodek A."/>
            <person name="McKenney K."/>
            <person name="FitzGerald L.M."/>
            <person name="Lee N."/>
            <person name="Adams M.D."/>
            <person name="Hickey E.K."/>
            <person name="Berg D.E."/>
            <person name="Gocayne J.D."/>
            <person name="Utterback T.R."/>
            <person name="Peterson J.D."/>
            <person name="Kelley J.M."/>
            <person name="Cotton M.D."/>
            <person name="Weidman J.F."/>
            <person name="Fujii C."/>
            <person name="Bowman C."/>
            <person name="Watthey L."/>
            <person name="Wallin E."/>
            <person name="Hayes W.S."/>
            <person name="Borodovsky M."/>
            <person name="Karp P.D."/>
            <person name="Smith H.O."/>
            <person name="Fraser C.M."/>
            <person name="Venter J.C."/>
        </authorList>
    </citation>
    <scope>NUCLEOTIDE SEQUENCE [LARGE SCALE GENOMIC DNA]</scope>
    <source>
        <strain>ATCC 700392 / 26695</strain>
    </source>
</reference>
<gene>
    <name type="ordered locus">HP_0085</name>
</gene>
<feature type="chain" id="PRO_0000128675" description="Uncharacterized protein HP_0085">
    <location>
        <begin position="1"/>
        <end position="62"/>
    </location>
</feature>
<feature type="transmembrane region" description="Helical" evidence="1">
    <location>
        <begin position="17"/>
        <end position="37"/>
    </location>
</feature>
<accession>P64651</accession>
<accession>O24912</accession>
<name>Y085_HELPY</name>
<sequence length="62" mass="7245">MQKEQEAQEIAKKAVKIVFFLGLVVVLLMMINLYMLINQINASAQMSHQIKKIEERLNQEQK</sequence>
<comment type="subcellular location">
    <subcellularLocation>
        <location evidence="2">Membrane</location>
        <topology evidence="2">Single-pass membrane protein</topology>
    </subcellularLocation>
</comment>
<protein>
    <recommendedName>
        <fullName>Uncharacterized protein HP_0085</fullName>
    </recommendedName>
</protein>